<proteinExistence type="inferred from homology"/>
<organism>
    <name type="scientific">Aspergillus flavus (strain ATCC 200026 / FGSC A1120 / IAM 13836 / NRRL 3357 / JCM 12722 / SRRC 167)</name>
    <dbReference type="NCBI Taxonomy" id="332952"/>
    <lineage>
        <taxon>Eukaryota</taxon>
        <taxon>Fungi</taxon>
        <taxon>Dikarya</taxon>
        <taxon>Ascomycota</taxon>
        <taxon>Pezizomycotina</taxon>
        <taxon>Eurotiomycetes</taxon>
        <taxon>Eurotiomycetidae</taxon>
        <taxon>Eurotiales</taxon>
        <taxon>Aspergillaceae</taxon>
        <taxon>Aspergillus</taxon>
        <taxon>Aspergillus subgen. Circumdati</taxon>
    </lineage>
</organism>
<protein>
    <recommendedName>
        <fullName>Probable arabinan endo-1,5-alpha-L-arabinosidase C</fullName>
        <ecNumber>3.2.1.99</ecNumber>
    </recommendedName>
    <alternativeName>
        <fullName>Endo-1,5-alpha-L-arabinanase C</fullName>
        <shortName>ABN C</shortName>
    </alternativeName>
</protein>
<reference key="1">
    <citation type="journal article" date="2015" name="Genome Announc.">
        <title>Genome sequence of Aspergillus flavus NRRL 3357, a strain that causes aflatoxin contamination of food and feed.</title>
        <authorList>
            <person name="Nierman W.C."/>
            <person name="Yu J."/>
            <person name="Fedorova-Abrams N.D."/>
            <person name="Losada L."/>
            <person name="Cleveland T.E."/>
            <person name="Bhatnagar D."/>
            <person name="Bennett J.W."/>
            <person name="Dean R."/>
            <person name="Payne G.A."/>
        </authorList>
    </citation>
    <scope>NUCLEOTIDE SEQUENCE [LARGE SCALE GENOMIC DNA]</scope>
    <source>
        <strain>ATCC 200026 / FGSC A1120 / IAM 13836 / NRRL 3357 / JCM 12722 / SRRC 167</strain>
    </source>
</reference>
<feature type="signal peptide" evidence="3">
    <location>
        <begin position="1"/>
        <end position="17"/>
    </location>
</feature>
<feature type="chain" id="PRO_0000394634" description="Probable arabinan endo-1,5-alpha-L-arabinosidase C">
    <location>
        <begin position="18"/>
        <end position="317"/>
    </location>
</feature>
<feature type="active site" description="Proton acceptor" evidence="2">
    <location>
        <position position="32"/>
    </location>
</feature>
<feature type="active site" description="Proton donor" evidence="2">
    <location>
        <position position="198"/>
    </location>
</feature>
<feature type="site" description="Important for catalytic activity, responsible for pKa modulation of the active site Glu and correct orientation of both the proton donor and substrate" evidence="2">
    <location>
        <position position="147"/>
    </location>
</feature>
<feature type="glycosylation site" description="N-linked (GlcNAc...) asparagine" evidence="3">
    <location>
        <position position="190"/>
    </location>
</feature>
<dbReference type="EC" id="3.2.1.99"/>
<dbReference type="EMBL" id="EQ963481">
    <property type="protein sequence ID" value="EED48146.1"/>
    <property type="status" value="ALT_INIT"/>
    <property type="molecule type" value="Genomic_DNA"/>
</dbReference>
<dbReference type="RefSeq" id="XP_002381562.1">
    <property type="nucleotide sequence ID" value="XM_002381521.1"/>
</dbReference>
<dbReference type="SMR" id="B8NMD3"/>
<dbReference type="STRING" id="332952.B8NMD3"/>
<dbReference type="GlyCosmos" id="B8NMD3">
    <property type="glycosylation" value="1 site, No reported glycans"/>
</dbReference>
<dbReference type="EnsemblFungi" id="EED48146">
    <property type="protein sequence ID" value="EED48146"/>
    <property type="gene ID" value="AFLA_123690"/>
</dbReference>
<dbReference type="VEuPathDB" id="FungiDB:AFLA_012158"/>
<dbReference type="eggNOG" id="ENOG502QTQG">
    <property type="taxonomic scope" value="Eukaryota"/>
</dbReference>
<dbReference type="UniPathway" id="UPA00667"/>
<dbReference type="GO" id="GO:0005576">
    <property type="term" value="C:extracellular region"/>
    <property type="evidence" value="ECO:0007669"/>
    <property type="project" value="UniProtKB-SubCell"/>
</dbReference>
<dbReference type="GO" id="GO:0046558">
    <property type="term" value="F:arabinan endo-1,5-alpha-L-arabinosidase activity"/>
    <property type="evidence" value="ECO:0007669"/>
    <property type="project" value="UniProtKB-EC"/>
</dbReference>
<dbReference type="GO" id="GO:0031222">
    <property type="term" value="P:arabinan catabolic process"/>
    <property type="evidence" value="ECO:0007669"/>
    <property type="project" value="UniProtKB-UniPathway"/>
</dbReference>
<dbReference type="GO" id="GO:0045493">
    <property type="term" value="P:xylan catabolic process"/>
    <property type="evidence" value="ECO:0007669"/>
    <property type="project" value="UniProtKB-KW"/>
</dbReference>
<dbReference type="CDD" id="cd18831">
    <property type="entry name" value="GH43_AnAbnA-like"/>
    <property type="match status" value="1"/>
</dbReference>
<dbReference type="Gene3D" id="2.115.10.20">
    <property type="entry name" value="Glycosyl hydrolase domain, family 43"/>
    <property type="match status" value="1"/>
</dbReference>
<dbReference type="InterPro" id="IPR050727">
    <property type="entry name" value="GH43_arabinanases"/>
</dbReference>
<dbReference type="InterPro" id="IPR006710">
    <property type="entry name" value="Glyco_hydro_43"/>
</dbReference>
<dbReference type="InterPro" id="IPR016840">
    <property type="entry name" value="Glyco_hydro_43_endo_a_Ara-ase"/>
</dbReference>
<dbReference type="InterPro" id="IPR023296">
    <property type="entry name" value="Glyco_hydro_beta-prop_sf"/>
</dbReference>
<dbReference type="PANTHER" id="PTHR43301">
    <property type="entry name" value="ARABINAN ENDO-1,5-ALPHA-L-ARABINOSIDASE"/>
    <property type="match status" value="1"/>
</dbReference>
<dbReference type="PANTHER" id="PTHR43301:SF7">
    <property type="entry name" value="ARABINAN ENDO-1,5-ALPHA-L-ARABINOSIDASE C"/>
    <property type="match status" value="1"/>
</dbReference>
<dbReference type="Pfam" id="PF04616">
    <property type="entry name" value="Glyco_hydro_43"/>
    <property type="match status" value="1"/>
</dbReference>
<dbReference type="PIRSF" id="PIRSF026534">
    <property type="entry name" value="Endo_alpha-L-arabinosidase"/>
    <property type="match status" value="1"/>
</dbReference>
<dbReference type="SUPFAM" id="SSF75005">
    <property type="entry name" value="Arabinanase/levansucrase/invertase"/>
    <property type="match status" value="1"/>
</dbReference>
<accession>B8NMD3</accession>
<name>ABNC_ASPFN</name>
<evidence type="ECO:0000250" key="1"/>
<evidence type="ECO:0000250" key="2">
    <source>
        <dbReference type="UniProtKB" id="P94522"/>
    </source>
</evidence>
<evidence type="ECO:0000255" key="3"/>
<evidence type="ECO:0000305" key="4"/>
<gene>
    <name type="primary">abnC</name>
    <name type="ORF">AFLA_123690</name>
</gene>
<sequence length="317" mass="34189">MLSFLAALSLPLALVNAYANPGTCNGNCWAHDPGLWKHDDGRYFLFSTGNGIHISSAPSLQGPWTEVGYALPDGSSINHDGNKNLWAPDVHKGDDGKYYMYYSVSTLGSQNSVIGVASSTTMEPGSWTDHGSTGLSSDGSQGYNTIDANWIKIGDQQVLNFGSYWQGLYQIDLAGPLKIGTAAPVNIAYNATGQHAIEASFLYQQNGFYYLFFSSGKANGYDTSFPAQGEEYRINVCRSSTGRGDFVDKNGVSCLQSGGTTVLASHDNVYGPGGQGVLEDNGAVLYYHYAPRNGDLSVSSYQFGWNRLNWVDGWPTV</sequence>
<comment type="function">
    <text evidence="1">Endo-1,5-alpha-L-arabinanase involved in degradation of pectin. Its preferred substrate is linear 1,5-alpha-L-arabinan (By similarity).</text>
</comment>
<comment type="catalytic activity">
    <reaction>
        <text>Endohydrolysis of (1-&gt;5)-alpha-arabinofuranosidic linkages in (1-&gt;5)-arabinans.</text>
        <dbReference type="EC" id="3.2.1.99"/>
    </reaction>
</comment>
<comment type="pathway">
    <text>Glycan metabolism; L-arabinan degradation.</text>
</comment>
<comment type="subcellular location">
    <subcellularLocation>
        <location evidence="1">Secreted</location>
    </subcellularLocation>
</comment>
<comment type="similarity">
    <text evidence="4">Belongs to the glycosyl hydrolase 43 family.</text>
</comment>
<comment type="sequence caution" evidence="4">
    <conflict type="erroneous initiation">
        <sequence resource="EMBL-CDS" id="EED48146"/>
    </conflict>
    <text>Extended N-terminus.</text>
</comment>
<keyword id="KW-0119">Carbohydrate metabolism</keyword>
<keyword id="KW-0325">Glycoprotein</keyword>
<keyword id="KW-0326">Glycosidase</keyword>
<keyword id="KW-0378">Hydrolase</keyword>
<keyword id="KW-0624">Polysaccharide degradation</keyword>
<keyword id="KW-0964">Secreted</keyword>
<keyword id="KW-0732">Signal</keyword>
<keyword id="KW-0858">Xylan degradation</keyword>